<name>ASPG1_ARATH</name>
<comment type="function">
    <text evidence="5">Aspartic protease involved in drought avoidance through abscisic acid signaling.</text>
</comment>
<comment type="activity regulation">
    <text evidence="5">Inhibited by pepstatin A.</text>
</comment>
<comment type="subcellular location">
    <subcellularLocation>
        <location evidence="5">Endoplasmic reticulum</location>
    </subcellularLocation>
</comment>
<comment type="tissue specificity">
    <text evidence="5">Expressed in young seedlings, leaves, guard-cells, stems, flowers and siliques, but not in roots or mesophyll cells.</text>
</comment>
<comment type="induction">
    <text evidence="5">Up-regulated by abscisic acid and drought.</text>
</comment>
<comment type="disruption phenotype">
    <text evidence="5">No effect on stomatal closure.</text>
</comment>
<comment type="similarity">
    <text evidence="6">Belongs to the peptidase A1 family.</text>
</comment>
<evidence type="ECO:0000250" key="1"/>
<evidence type="ECO:0000255" key="2"/>
<evidence type="ECO:0000255" key="3">
    <source>
        <dbReference type="PROSITE-ProRule" id="PRU01103"/>
    </source>
</evidence>
<evidence type="ECO:0000255" key="4">
    <source>
        <dbReference type="PROSITE-ProRule" id="PRU10094"/>
    </source>
</evidence>
<evidence type="ECO:0000269" key="5">
    <source>
    </source>
</evidence>
<evidence type="ECO:0000305" key="6"/>
<dbReference type="EC" id="3.4.23.-"/>
<dbReference type="EMBL" id="AB026658">
    <property type="protein sequence ID" value="BAB01116.1"/>
    <property type="molecule type" value="Genomic_DNA"/>
</dbReference>
<dbReference type="EMBL" id="CP002686">
    <property type="protein sequence ID" value="AEE76104.1"/>
    <property type="molecule type" value="Genomic_DNA"/>
</dbReference>
<dbReference type="EMBL" id="AY150497">
    <property type="protein sequence ID" value="AAN13013.1"/>
    <property type="molecule type" value="mRNA"/>
</dbReference>
<dbReference type="EMBL" id="AY080874">
    <property type="protein sequence ID" value="AAL87345.1"/>
    <property type="molecule type" value="mRNA"/>
</dbReference>
<dbReference type="RefSeq" id="NP_188478.1">
    <property type="nucleotide sequence ID" value="NM_112734.3"/>
</dbReference>
<dbReference type="SMR" id="Q9LS40"/>
<dbReference type="BioGRID" id="6712">
    <property type="interactions" value="1"/>
</dbReference>
<dbReference type="FunCoup" id="Q9LS40">
    <property type="interactions" value="152"/>
</dbReference>
<dbReference type="IntAct" id="Q9LS40">
    <property type="interactions" value="1"/>
</dbReference>
<dbReference type="STRING" id="3702.Q9LS40"/>
<dbReference type="MEROPS" id="A01.A09"/>
<dbReference type="iPTMnet" id="Q9LS40"/>
<dbReference type="SwissPalm" id="Q9LS40"/>
<dbReference type="PaxDb" id="3702-AT3G18490.1"/>
<dbReference type="ProteomicsDB" id="246865"/>
<dbReference type="EnsemblPlants" id="AT3G18490.1">
    <property type="protein sequence ID" value="AT3G18490.1"/>
    <property type="gene ID" value="AT3G18490"/>
</dbReference>
<dbReference type="GeneID" id="821379"/>
<dbReference type="Gramene" id="AT3G18490.1">
    <property type="protein sequence ID" value="AT3G18490.1"/>
    <property type="gene ID" value="AT3G18490"/>
</dbReference>
<dbReference type="KEGG" id="ath:AT3G18490"/>
<dbReference type="Araport" id="AT3G18490"/>
<dbReference type="TAIR" id="AT3G18490">
    <property type="gene designation" value="ASPG1"/>
</dbReference>
<dbReference type="eggNOG" id="KOG1339">
    <property type="taxonomic scope" value="Eukaryota"/>
</dbReference>
<dbReference type="HOGENOM" id="CLU_005738_5_0_1"/>
<dbReference type="InParanoid" id="Q9LS40"/>
<dbReference type="OMA" id="LTCDAQQ"/>
<dbReference type="PhylomeDB" id="Q9LS40"/>
<dbReference type="CD-CODE" id="4299E36E">
    <property type="entry name" value="Nucleolus"/>
</dbReference>
<dbReference type="PRO" id="PR:Q9LS40"/>
<dbReference type="Proteomes" id="UP000006548">
    <property type="component" value="Chromosome 3"/>
</dbReference>
<dbReference type="ExpressionAtlas" id="Q9LS40">
    <property type="expression patterns" value="baseline and differential"/>
</dbReference>
<dbReference type="GO" id="GO:0005783">
    <property type="term" value="C:endoplasmic reticulum"/>
    <property type="evidence" value="ECO:0000314"/>
    <property type="project" value="TAIR"/>
</dbReference>
<dbReference type="GO" id="GO:0004190">
    <property type="term" value="F:aspartic-type endopeptidase activity"/>
    <property type="evidence" value="ECO:0007669"/>
    <property type="project" value="UniProtKB-KW"/>
</dbReference>
<dbReference type="GO" id="GO:0070001">
    <property type="term" value="F:aspartic-type peptidase activity"/>
    <property type="evidence" value="ECO:0000314"/>
    <property type="project" value="TAIR"/>
</dbReference>
<dbReference type="GO" id="GO:0003677">
    <property type="term" value="F:DNA binding"/>
    <property type="evidence" value="ECO:0007669"/>
    <property type="project" value="UniProtKB-KW"/>
</dbReference>
<dbReference type="GO" id="GO:0006508">
    <property type="term" value="P:proteolysis"/>
    <property type="evidence" value="ECO:0007669"/>
    <property type="project" value="UniProtKB-KW"/>
</dbReference>
<dbReference type="GO" id="GO:0009737">
    <property type="term" value="P:response to abscisic acid"/>
    <property type="evidence" value="ECO:0000315"/>
    <property type="project" value="TAIR"/>
</dbReference>
<dbReference type="GO" id="GO:0009414">
    <property type="term" value="P:response to water deprivation"/>
    <property type="evidence" value="ECO:0000315"/>
    <property type="project" value="TAIR"/>
</dbReference>
<dbReference type="GO" id="GO:0009627">
    <property type="term" value="P:systemic acquired resistance"/>
    <property type="evidence" value="ECO:0000315"/>
    <property type="project" value="TAIR"/>
</dbReference>
<dbReference type="FunFam" id="2.40.70.10:FF:000010">
    <property type="entry name" value="Aspartyl protease family protein 2"/>
    <property type="match status" value="1"/>
</dbReference>
<dbReference type="FunFam" id="2.40.70.10:FF:000016">
    <property type="entry name" value="Probable aspartic protease At2g35615"/>
    <property type="match status" value="1"/>
</dbReference>
<dbReference type="Gene3D" id="2.40.70.10">
    <property type="entry name" value="Acid Proteases"/>
    <property type="match status" value="2"/>
</dbReference>
<dbReference type="InterPro" id="IPR001461">
    <property type="entry name" value="Aspartic_peptidase_A1"/>
</dbReference>
<dbReference type="InterPro" id="IPR001969">
    <property type="entry name" value="Aspartic_peptidase_AS"/>
</dbReference>
<dbReference type="InterPro" id="IPR033121">
    <property type="entry name" value="PEPTIDASE_A1"/>
</dbReference>
<dbReference type="InterPro" id="IPR021109">
    <property type="entry name" value="Peptidase_aspartic_dom_sf"/>
</dbReference>
<dbReference type="InterPro" id="IPR032799">
    <property type="entry name" value="TAXi_C"/>
</dbReference>
<dbReference type="InterPro" id="IPR032861">
    <property type="entry name" value="TAXi_N"/>
</dbReference>
<dbReference type="PANTHER" id="PTHR13683">
    <property type="entry name" value="ASPARTYL PROTEASES"/>
    <property type="match status" value="1"/>
</dbReference>
<dbReference type="PANTHER" id="PTHR13683:SF274">
    <property type="entry name" value="PROTEIN ASPARTIC PROTEASE IN GUARD CELL 1"/>
    <property type="match status" value="1"/>
</dbReference>
<dbReference type="Pfam" id="PF14541">
    <property type="entry name" value="TAXi_C"/>
    <property type="match status" value="1"/>
</dbReference>
<dbReference type="Pfam" id="PF14543">
    <property type="entry name" value="TAXi_N"/>
    <property type="match status" value="1"/>
</dbReference>
<dbReference type="SUPFAM" id="SSF50630">
    <property type="entry name" value="Acid proteases"/>
    <property type="match status" value="1"/>
</dbReference>
<dbReference type="PROSITE" id="PS00141">
    <property type="entry name" value="ASP_PROTEASE"/>
    <property type="match status" value="1"/>
</dbReference>
<dbReference type="PROSITE" id="PS51767">
    <property type="entry name" value="PEPTIDASE_A1"/>
    <property type="match status" value="1"/>
</dbReference>
<organism>
    <name type="scientific">Arabidopsis thaliana</name>
    <name type="common">Mouse-ear cress</name>
    <dbReference type="NCBI Taxonomy" id="3702"/>
    <lineage>
        <taxon>Eukaryota</taxon>
        <taxon>Viridiplantae</taxon>
        <taxon>Streptophyta</taxon>
        <taxon>Embryophyta</taxon>
        <taxon>Tracheophyta</taxon>
        <taxon>Spermatophyta</taxon>
        <taxon>Magnoliopsida</taxon>
        <taxon>eudicotyledons</taxon>
        <taxon>Gunneridae</taxon>
        <taxon>Pentapetalae</taxon>
        <taxon>rosids</taxon>
        <taxon>malvids</taxon>
        <taxon>Brassicales</taxon>
        <taxon>Brassicaceae</taxon>
        <taxon>Camelineae</taxon>
        <taxon>Arabidopsis</taxon>
    </lineage>
</organism>
<accession>Q9LS40</accession>
<accession>Q8RXI1</accession>
<reference key="1">
    <citation type="journal article" date="2000" name="DNA Res.">
        <title>Structural analysis of Arabidopsis thaliana chromosome 3. I. Sequence features of the regions of 4,504,864 bp covered by sixty P1 and TAC clones.</title>
        <authorList>
            <person name="Sato S."/>
            <person name="Nakamura Y."/>
            <person name="Kaneko T."/>
            <person name="Katoh T."/>
            <person name="Asamizu E."/>
            <person name="Tabata S."/>
        </authorList>
    </citation>
    <scope>NUCLEOTIDE SEQUENCE [LARGE SCALE GENOMIC DNA]</scope>
    <source>
        <strain>cv. Columbia</strain>
    </source>
</reference>
<reference key="2">
    <citation type="journal article" date="2017" name="Plant J.">
        <title>Araport11: a complete reannotation of the Arabidopsis thaliana reference genome.</title>
        <authorList>
            <person name="Cheng C.Y."/>
            <person name="Krishnakumar V."/>
            <person name="Chan A.P."/>
            <person name="Thibaud-Nissen F."/>
            <person name="Schobel S."/>
            <person name="Town C.D."/>
        </authorList>
    </citation>
    <scope>GENOME REANNOTATION</scope>
    <source>
        <strain>cv. Columbia</strain>
    </source>
</reference>
<reference key="3">
    <citation type="journal article" date="2003" name="Science">
        <title>Empirical analysis of transcriptional activity in the Arabidopsis genome.</title>
        <authorList>
            <person name="Yamada K."/>
            <person name="Lim J."/>
            <person name="Dale J.M."/>
            <person name="Chen H."/>
            <person name="Shinn P."/>
            <person name="Palm C.J."/>
            <person name="Southwick A.M."/>
            <person name="Wu H.C."/>
            <person name="Kim C.J."/>
            <person name="Nguyen M."/>
            <person name="Pham P.K."/>
            <person name="Cheuk R.F."/>
            <person name="Karlin-Newmann G."/>
            <person name="Liu S.X."/>
            <person name="Lam B."/>
            <person name="Sakano H."/>
            <person name="Wu T."/>
            <person name="Yu G."/>
            <person name="Miranda M."/>
            <person name="Quach H.L."/>
            <person name="Tripp M."/>
            <person name="Chang C.H."/>
            <person name="Lee J.M."/>
            <person name="Toriumi M.J."/>
            <person name="Chan M.M."/>
            <person name="Tang C.C."/>
            <person name="Onodera C.S."/>
            <person name="Deng J.M."/>
            <person name="Akiyama K."/>
            <person name="Ansari Y."/>
            <person name="Arakawa T."/>
            <person name="Banh J."/>
            <person name="Banno F."/>
            <person name="Bowser L."/>
            <person name="Brooks S.Y."/>
            <person name="Carninci P."/>
            <person name="Chao Q."/>
            <person name="Choy N."/>
            <person name="Enju A."/>
            <person name="Goldsmith A.D."/>
            <person name="Gurjal M."/>
            <person name="Hansen N.F."/>
            <person name="Hayashizaki Y."/>
            <person name="Johnson-Hopson C."/>
            <person name="Hsuan V.W."/>
            <person name="Iida K."/>
            <person name="Karnes M."/>
            <person name="Khan S."/>
            <person name="Koesema E."/>
            <person name="Ishida J."/>
            <person name="Jiang P.X."/>
            <person name="Jones T."/>
            <person name="Kawai J."/>
            <person name="Kamiya A."/>
            <person name="Meyers C."/>
            <person name="Nakajima M."/>
            <person name="Narusaka M."/>
            <person name="Seki M."/>
            <person name="Sakurai T."/>
            <person name="Satou M."/>
            <person name="Tamse R."/>
            <person name="Vaysberg M."/>
            <person name="Wallender E.K."/>
            <person name="Wong C."/>
            <person name="Yamamura Y."/>
            <person name="Yuan S."/>
            <person name="Shinozaki K."/>
            <person name="Davis R.W."/>
            <person name="Theologis A."/>
            <person name="Ecker J.R."/>
        </authorList>
    </citation>
    <scope>NUCLEOTIDE SEQUENCE [LARGE SCALE MRNA]</scope>
    <source>
        <strain>cv. Columbia</strain>
    </source>
</reference>
<reference key="4">
    <citation type="journal article" date="2004" name="Phytochemistry">
        <title>The S8 serine, C1A cysteine and A1 aspartic protease families in Arabidopsis.</title>
        <authorList>
            <person name="Beers E.P."/>
            <person name="Jones A.M."/>
            <person name="Dickerman A.W."/>
        </authorList>
    </citation>
    <scope>IDENTIFICATION</scope>
</reference>
<reference key="5">
    <citation type="journal article" date="2012" name="J. Exp. Bot.">
        <title>Overexpression of the aspartic protease ASPG1 gene confers drought avoidance in Arabidopsis.</title>
        <authorList>
            <person name="Yao X."/>
            <person name="Xiong W."/>
            <person name="Ye T."/>
            <person name="Wu Y."/>
        </authorList>
    </citation>
    <scope>FUNCTION</scope>
    <scope>DISRUPTION PHENOTYPE</scope>
    <scope>INDUCTION BY ABSCISIC ACID AND DROUGHT</scope>
    <scope>TISSUE SPECIFICITY</scope>
    <scope>SUBCELLULAR LOCATION</scope>
    <scope>MUTAGENESIS OF ASP-180 AND ASP-379</scope>
    <scope>ACTIVITY REGULATION</scope>
    <source>
        <strain>cv. Columbia</strain>
    </source>
</reference>
<gene>
    <name type="primary">ASPG1</name>
    <name type="ordered locus">At3g18490</name>
    <name type="ORF">MYF24.22</name>
</gene>
<protein>
    <recommendedName>
        <fullName>Protein ASPARTIC PROTEASE IN GUARD CELL 1</fullName>
        <shortName>AtASPG1</shortName>
        <ecNumber>3.4.23.-</ecNumber>
    </recommendedName>
</protein>
<proteinExistence type="evidence at protein level"/>
<keyword id="KW-0064">Aspartyl protease</keyword>
<keyword id="KW-1015">Disulfide bond</keyword>
<keyword id="KW-0238">DNA-binding</keyword>
<keyword id="KW-0256">Endoplasmic reticulum</keyword>
<keyword id="KW-0378">Hydrolase</keyword>
<keyword id="KW-0645">Protease</keyword>
<keyword id="KW-1185">Reference proteome</keyword>
<keyword id="KW-0732">Signal</keyword>
<feature type="signal peptide" evidence="2">
    <location>
        <begin position="1"/>
        <end position="24"/>
    </location>
</feature>
<feature type="chain" id="PRO_0000417495" description="Protein ASPARTIC PROTEASE IN GUARD CELL 1">
    <location>
        <begin position="25"/>
        <end position="500"/>
    </location>
</feature>
<feature type="domain" description="Peptidase A1" evidence="3">
    <location>
        <begin position="162"/>
        <end position="496"/>
    </location>
</feature>
<feature type="active site" evidence="4">
    <location>
        <position position="180"/>
    </location>
</feature>
<feature type="active site" evidence="4">
    <location>
        <position position="379"/>
    </location>
</feature>
<feature type="disulfide bond" evidence="1">
    <location>
        <begin position="190"/>
        <end position="193"/>
    </location>
</feature>
<feature type="disulfide bond" evidence="1">
    <location>
        <begin position="196"/>
        <end position="271"/>
    </location>
</feature>
<feature type="disulfide bond" evidence="1">
    <location>
        <begin position="217"/>
        <end position="235"/>
    </location>
</feature>
<feature type="disulfide bond" evidence="1">
    <location>
        <begin position="222"/>
        <end position="230"/>
    </location>
</feature>
<feature type="disulfide bond" evidence="1">
    <location>
        <begin position="307"/>
        <end position="500"/>
    </location>
</feature>
<feature type="disulfide bond" evidence="1">
    <location>
        <begin position="419"/>
        <end position="461"/>
    </location>
</feature>
<feature type="mutagenesis site" description="Loss of protease activity. Loss of protease activity; when associated with N-379." evidence="5">
    <original>D</original>
    <variation>N</variation>
    <location>
        <position position="180"/>
    </location>
</feature>
<feature type="mutagenesis site" description="Loss of protease activity. Loss of protease activity; when associated with N-180." evidence="5">
    <original>D</original>
    <variation>N</variation>
    <location>
        <position position="379"/>
    </location>
</feature>
<feature type="sequence conflict" description="In Ref. 3; AAL87345." evidence="6" ref="3">
    <original>E</original>
    <variation>D</variation>
    <location>
        <position position="174"/>
    </location>
</feature>
<sequence length="500" mass="53234">MAFPRFLSLLAVVTLSLFLTTTDASSRSLSTPPKTNVLDVVSSLQQTQTILSLDPTRSSLTTTKPESLSDPVFFNSSSPLSLELHSRDTFVASQHKDYKSLTLSRLERDSSRVAGIVAKIRFAVEGVDRSDLKPVYNEDTRYQTEDLTTPVVSGASQGSGEYFSRIGVGTPAKEMYLVLDTGSDVNWIQCEPCADCYQQSDPVFNPTSSSTYKSLTCSAPQCSLLETSACRSNKCLYQVSYGDGSFTVGELATDTVTFGNSGKINNVALGCGHDNEGLFTGAAGLLGLGGGVLSITNQMKATSFSYCLVDRDSGKSSSLDFNSVQLGGGDATAPLLRNKKIDTFYYVGLSGFSVGGEKVVLPDAIFDVDASGSGGVILDCGTAVTRLQTQAYNSLRDAFLKLTVNLKKGSSSISLFDTCYDFSSLSTVKVPTVAFHFTGGKSLDLPAKNYLIPVDDSGTFCFAFAPTSSSLSIIGNVQQQGTRITYDLSKNVIGLSGNKC</sequence>